<feature type="chain" id="PRO_0000157535" description="Large ribosomal subunit protein bL12">
    <location>
        <begin position="1"/>
        <end position="122"/>
    </location>
</feature>
<feature type="region of interest" description="Disordered" evidence="2">
    <location>
        <begin position="94"/>
        <end position="122"/>
    </location>
</feature>
<feature type="compositionally biased region" description="Basic and acidic residues" evidence="2">
    <location>
        <begin position="99"/>
        <end position="114"/>
    </location>
</feature>
<gene>
    <name evidence="1" type="primary">rplL</name>
</gene>
<comment type="function">
    <text evidence="1">Forms part of the ribosomal stalk which helps the ribosome interact with GTP-bound translation factors. Is thus essential for accurate translation.</text>
</comment>
<comment type="subunit">
    <text evidence="1">Homodimer. Part of the ribosomal stalk of the 50S ribosomal subunit. Forms a multimeric L10(L12)X complex, where L10 forms an elongated spine to which 2 to 4 L12 dimers bind in a sequential fashion. Binds GTP-bound translation factors.</text>
</comment>
<comment type="similarity">
    <text evidence="1">Belongs to the bacterial ribosomal protein bL12 family.</text>
</comment>
<reference key="1">
    <citation type="journal article" date="1987" name="Biochimie">
        <title>The primary structure of the ribosomal A-protein (L12) from the halophilic eubacterium Haloanaerobium praevalens.</title>
        <authorList>
            <person name="Matheson A.T."/>
            <person name="Louie K.A."/>
            <person name="Tak B.D."/>
            <person name="Zuker M."/>
        </authorList>
    </citation>
    <scope>PROTEIN SEQUENCE</scope>
</reference>
<proteinExistence type="evidence at protein level"/>
<evidence type="ECO:0000255" key="1">
    <source>
        <dbReference type="HAMAP-Rule" id="MF_00368"/>
    </source>
</evidence>
<evidence type="ECO:0000256" key="2">
    <source>
        <dbReference type="SAM" id="MobiDB-lite"/>
    </source>
</evidence>
<evidence type="ECO:0000305" key="3"/>
<sequence>MNKEEIMSAIEEMSVLELSELVEDLEEKFGVSAAAPVAVAGGAAGAGAAAEEKSEFDVFLADIGGKKIKVIKAVRELTGLGLKEAKGVVDDAPGNVKEGLSKEDAEEMKEKLEEAGATVELK</sequence>
<organism>
    <name type="scientific">Halanaerobium praevalens</name>
    <dbReference type="NCBI Taxonomy" id="2331"/>
    <lineage>
        <taxon>Bacteria</taxon>
        <taxon>Bacillati</taxon>
        <taxon>Bacillota</taxon>
        <taxon>Clostridia</taxon>
        <taxon>Halanaerobiales</taxon>
        <taxon>Halanaerobiaceae</taxon>
        <taxon>Halanaerobium</taxon>
    </lineage>
</organism>
<accession>P14134</accession>
<keyword id="KW-0903">Direct protein sequencing</keyword>
<keyword id="KW-0687">Ribonucleoprotein</keyword>
<keyword id="KW-0689">Ribosomal protein</keyword>
<name>RL7_HALPR</name>
<dbReference type="PIR" id="S06332">
    <property type="entry name" value="R5HG12"/>
</dbReference>
<dbReference type="SMR" id="P14134"/>
<dbReference type="OMA" id="LEDKWGV"/>
<dbReference type="GO" id="GO:0022625">
    <property type="term" value="C:cytosolic large ribosomal subunit"/>
    <property type="evidence" value="ECO:0007669"/>
    <property type="project" value="TreeGrafter"/>
</dbReference>
<dbReference type="GO" id="GO:0003729">
    <property type="term" value="F:mRNA binding"/>
    <property type="evidence" value="ECO:0007669"/>
    <property type="project" value="TreeGrafter"/>
</dbReference>
<dbReference type="GO" id="GO:0003735">
    <property type="term" value="F:structural constituent of ribosome"/>
    <property type="evidence" value="ECO:0007669"/>
    <property type="project" value="InterPro"/>
</dbReference>
<dbReference type="GO" id="GO:0006412">
    <property type="term" value="P:translation"/>
    <property type="evidence" value="ECO:0007669"/>
    <property type="project" value="UniProtKB-UniRule"/>
</dbReference>
<dbReference type="CDD" id="cd00387">
    <property type="entry name" value="Ribosomal_L7_L12"/>
    <property type="match status" value="1"/>
</dbReference>
<dbReference type="FunFam" id="3.30.1390.10:FF:000001">
    <property type="entry name" value="50S ribosomal protein L7/L12"/>
    <property type="match status" value="1"/>
</dbReference>
<dbReference type="Gene3D" id="3.30.1390.10">
    <property type="match status" value="1"/>
</dbReference>
<dbReference type="Gene3D" id="1.20.5.710">
    <property type="entry name" value="Single helix bin"/>
    <property type="match status" value="1"/>
</dbReference>
<dbReference type="HAMAP" id="MF_00368">
    <property type="entry name" value="Ribosomal_bL12"/>
    <property type="match status" value="1"/>
</dbReference>
<dbReference type="InterPro" id="IPR000206">
    <property type="entry name" value="Ribosomal_bL12"/>
</dbReference>
<dbReference type="InterPro" id="IPR013823">
    <property type="entry name" value="Ribosomal_bL12_C"/>
</dbReference>
<dbReference type="InterPro" id="IPR014719">
    <property type="entry name" value="Ribosomal_bL12_C/ClpS-like"/>
</dbReference>
<dbReference type="InterPro" id="IPR008932">
    <property type="entry name" value="Ribosomal_bL12_oligo"/>
</dbReference>
<dbReference type="InterPro" id="IPR036235">
    <property type="entry name" value="Ribosomal_bL12_oligo_N_sf"/>
</dbReference>
<dbReference type="NCBIfam" id="TIGR00855">
    <property type="entry name" value="L12"/>
    <property type="match status" value="1"/>
</dbReference>
<dbReference type="PANTHER" id="PTHR45987">
    <property type="entry name" value="39S RIBOSOMAL PROTEIN L12"/>
    <property type="match status" value="1"/>
</dbReference>
<dbReference type="PANTHER" id="PTHR45987:SF4">
    <property type="entry name" value="LARGE RIBOSOMAL SUBUNIT PROTEIN BL12M"/>
    <property type="match status" value="1"/>
</dbReference>
<dbReference type="Pfam" id="PF00542">
    <property type="entry name" value="Ribosomal_L12"/>
    <property type="match status" value="1"/>
</dbReference>
<dbReference type="Pfam" id="PF16320">
    <property type="entry name" value="Ribosomal_L12_N"/>
    <property type="match status" value="1"/>
</dbReference>
<dbReference type="SUPFAM" id="SSF54736">
    <property type="entry name" value="ClpS-like"/>
    <property type="match status" value="1"/>
</dbReference>
<dbReference type="SUPFAM" id="SSF48300">
    <property type="entry name" value="Ribosomal protein L7/12, oligomerisation (N-terminal) domain"/>
    <property type="match status" value="1"/>
</dbReference>
<protein>
    <recommendedName>
        <fullName evidence="1">Large ribosomal subunit protein bL12</fullName>
    </recommendedName>
    <alternativeName>
        <fullName evidence="3">50S ribosomal protein L7/L12</fullName>
    </alternativeName>
</protein>